<keyword id="KW-0028">Amino-acid biosynthesis</keyword>
<keyword id="KW-0057">Aromatic amino acid biosynthesis</keyword>
<keyword id="KW-0274">FAD</keyword>
<keyword id="KW-0285">Flavoprotein</keyword>
<keyword id="KW-0288">FMN</keyword>
<keyword id="KW-0456">Lyase</keyword>
<keyword id="KW-0521">NADP</keyword>
<feature type="chain" id="PRO_1000204961" description="Chorismate synthase">
    <location>
        <begin position="1"/>
        <end position="391"/>
    </location>
</feature>
<feature type="binding site" evidence="1">
    <location>
        <position position="48"/>
    </location>
    <ligand>
        <name>NADP(+)</name>
        <dbReference type="ChEBI" id="CHEBI:58349"/>
    </ligand>
</feature>
<feature type="binding site" evidence="1">
    <location>
        <begin position="126"/>
        <end position="128"/>
    </location>
    <ligand>
        <name>FMN</name>
        <dbReference type="ChEBI" id="CHEBI:58210"/>
    </ligand>
</feature>
<feature type="binding site" evidence="1">
    <location>
        <position position="286"/>
    </location>
    <ligand>
        <name>FMN</name>
        <dbReference type="ChEBI" id="CHEBI:58210"/>
    </ligand>
</feature>
<feature type="binding site" evidence="1">
    <location>
        <begin position="301"/>
        <end position="305"/>
    </location>
    <ligand>
        <name>FMN</name>
        <dbReference type="ChEBI" id="CHEBI:58210"/>
    </ligand>
</feature>
<feature type="binding site" evidence="1">
    <location>
        <position position="328"/>
    </location>
    <ligand>
        <name>FMN</name>
        <dbReference type="ChEBI" id="CHEBI:58210"/>
    </ligand>
</feature>
<protein>
    <recommendedName>
        <fullName evidence="1">Chorismate synthase</fullName>
        <shortName evidence="1">CS</shortName>
        <ecNumber evidence="1">4.2.3.5</ecNumber>
    </recommendedName>
    <alternativeName>
        <fullName evidence="1">5-enolpyruvylshikimate-3-phosphate phospholyase</fullName>
    </alternativeName>
</protein>
<comment type="function">
    <text evidence="1">Catalyzes the anti-1,4-elimination of the C-3 phosphate and the C-6 proR hydrogen from 5-enolpyruvylshikimate-3-phosphate (EPSP) to yield chorismate, which is the branch point compound that serves as the starting substrate for the three terminal pathways of aromatic amino acid biosynthesis. This reaction introduces a second double bond into the aromatic ring system.</text>
</comment>
<comment type="catalytic activity">
    <reaction evidence="1">
        <text>5-O-(1-carboxyvinyl)-3-phosphoshikimate = chorismate + phosphate</text>
        <dbReference type="Rhea" id="RHEA:21020"/>
        <dbReference type="ChEBI" id="CHEBI:29748"/>
        <dbReference type="ChEBI" id="CHEBI:43474"/>
        <dbReference type="ChEBI" id="CHEBI:57701"/>
        <dbReference type="EC" id="4.2.3.5"/>
    </reaction>
</comment>
<comment type="cofactor">
    <cofactor evidence="1">
        <name>FMNH2</name>
        <dbReference type="ChEBI" id="CHEBI:57618"/>
    </cofactor>
    <text evidence="1">Reduced FMN (FMNH(2)).</text>
</comment>
<comment type="pathway">
    <text evidence="1">Metabolic intermediate biosynthesis; chorismate biosynthesis; chorismate from D-erythrose 4-phosphate and phosphoenolpyruvate: step 7/7.</text>
</comment>
<comment type="similarity">
    <text evidence="1">Belongs to the chorismate synthase family.</text>
</comment>
<evidence type="ECO:0000255" key="1">
    <source>
        <dbReference type="HAMAP-Rule" id="MF_00300"/>
    </source>
</evidence>
<organism>
    <name type="scientific">Saccharolobus islandicus (strain L.S.2.15 / Lassen #1)</name>
    <name type="common">Sulfolobus islandicus</name>
    <dbReference type="NCBI Taxonomy" id="429572"/>
    <lineage>
        <taxon>Archaea</taxon>
        <taxon>Thermoproteota</taxon>
        <taxon>Thermoprotei</taxon>
        <taxon>Sulfolobales</taxon>
        <taxon>Sulfolobaceae</taxon>
        <taxon>Saccharolobus</taxon>
    </lineage>
</organism>
<reference key="1">
    <citation type="journal article" date="2009" name="Proc. Natl. Acad. Sci. U.S.A.">
        <title>Biogeography of the Sulfolobus islandicus pan-genome.</title>
        <authorList>
            <person name="Reno M.L."/>
            <person name="Held N.L."/>
            <person name="Fields C.J."/>
            <person name="Burke P.V."/>
            <person name="Whitaker R.J."/>
        </authorList>
    </citation>
    <scope>NUCLEOTIDE SEQUENCE [LARGE SCALE GENOMIC DNA]</scope>
    <source>
        <strain>L.S.2.15 / Lassen #1</strain>
    </source>
</reference>
<proteinExistence type="inferred from homology"/>
<gene>
    <name evidence="1" type="primary">aroC</name>
    <name type="ordered locus">LS215_1935</name>
</gene>
<sequence>MPGNSFGKLFRVTTFGESHGPAVGVVIDGVPAGLPLTVEDIKFELEFRRPGRLYVSGRREKDEPEILSGIFNNRTTGSPIAVIVRNTDVISSFYEEIRYKPRPGHADLPFIMKYGYENWDYRGGGRASARETVGRVIAGAVAKKLLMLADTWIAGHLRSLGPEELNEEVTFEEVLCSKYSPVRASKKVLEEKYEALIKKATQEGDSYGGIAEVITKNPPIGLGEPVFDKMKAELAKAIMSIPAVTGFEYGLGFMVSKMKGSEANDEIIRKDNKIGWKYNYAGGILGGLTNGEDLIVRCAFKPTSSIRKPQKTIDLRNLEETYISVIGRHDPAVAIRGVTVVESMVALTLVDHAMRAGVIPLVKLTEEQGNIVQQRWERYVRSCKPMEESQL</sequence>
<dbReference type="EC" id="4.2.3.5" evidence="1"/>
<dbReference type="EMBL" id="CP001399">
    <property type="protein sequence ID" value="ACP35930.1"/>
    <property type="molecule type" value="Genomic_DNA"/>
</dbReference>
<dbReference type="RefSeq" id="WP_012711770.1">
    <property type="nucleotide sequence ID" value="NC_012589.1"/>
</dbReference>
<dbReference type="SMR" id="C3MRB7"/>
<dbReference type="GeneID" id="84062147"/>
<dbReference type="KEGG" id="sis:LS215_1935"/>
<dbReference type="HOGENOM" id="CLU_034547_0_0_2"/>
<dbReference type="OrthoDB" id="33049at2157"/>
<dbReference type="UniPathway" id="UPA00053">
    <property type="reaction ID" value="UER00090"/>
</dbReference>
<dbReference type="Proteomes" id="UP000001747">
    <property type="component" value="Chromosome"/>
</dbReference>
<dbReference type="GO" id="GO:0005829">
    <property type="term" value="C:cytosol"/>
    <property type="evidence" value="ECO:0007669"/>
    <property type="project" value="TreeGrafter"/>
</dbReference>
<dbReference type="GO" id="GO:0004107">
    <property type="term" value="F:chorismate synthase activity"/>
    <property type="evidence" value="ECO:0007669"/>
    <property type="project" value="UniProtKB-UniRule"/>
</dbReference>
<dbReference type="GO" id="GO:0010181">
    <property type="term" value="F:FMN binding"/>
    <property type="evidence" value="ECO:0007669"/>
    <property type="project" value="TreeGrafter"/>
</dbReference>
<dbReference type="GO" id="GO:0008652">
    <property type="term" value="P:amino acid biosynthetic process"/>
    <property type="evidence" value="ECO:0007669"/>
    <property type="project" value="UniProtKB-KW"/>
</dbReference>
<dbReference type="GO" id="GO:0009073">
    <property type="term" value="P:aromatic amino acid family biosynthetic process"/>
    <property type="evidence" value="ECO:0007669"/>
    <property type="project" value="UniProtKB-KW"/>
</dbReference>
<dbReference type="GO" id="GO:0009423">
    <property type="term" value="P:chorismate biosynthetic process"/>
    <property type="evidence" value="ECO:0007669"/>
    <property type="project" value="UniProtKB-UniRule"/>
</dbReference>
<dbReference type="CDD" id="cd07304">
    <property type="entry name" value="Chorismate_synthase"/>
    <property type="match status" value="1"/>
</dbReference>
<dbReference type="FunFam" id="3.60.150.10:FF:000002">
    <property type="entry name" value="Chorismate synthase"/>
    <property type="match status" value="1"/>
</dbReference>
<dbReference type="Gene3D" id="3.60.150.10">
    <property type="entry name" value="Chorismate synthase AroC"/>
    <property type="match status" value="1"/>
</dbReference>
<dbReference type="HAMAP" id="MF_00300">
    <property type="entry name" value="Chorismate_synth"/>
    <property type="match status" value="1"/>
</dbReference>
<dbReference type="InterPro" id="IPR000453">
    <property type="entry name" value="Chorismate_synth"/>
</dbReference>
<dbReference type="InterPro" id="IPR035904">
    <property type="entry name" value="Chorismate_synth_AroC_sf"/>
</dbReference>
<dbReference type="InterPro" id="IPR020541">
    <property type="entry name" value="Chorismate_synthase_CS"/>
</dbReference>
<dbReference type="NCBIfam" id="TIGR00033">
    <property type="entry name" value="aroC"/>
    <property type="match status" value="1"/>
</dbReference>
<dbReference type="NCBIfam" id="NF003793">
    <property type="entry name" value="PRK05382.1"/>
    <property type="match status" value="1"/>
</dbReference>
<dbReference type="PANTHER" id="PTHR21085">
    <property type="entry name" value="CHORISMATE SYNTHASE"/>
    <property type="match status" value="1"/>
</dbReference>
<dbReference type="PANTHER" id="PTHR21085:SF0">
    <property type="entry name" value="CHORISMATE SYNTHASE"/>
    <property type="match status" value="1"/>
</dbReference>
<dbReference type="Pfam" id="PF01264">
    <property type="entry name" value="Chorismate_synt"/>
    <property type="match status" value="1"/>
</dbReference>
<dbReference type="PIRSF" id="PIRSF001456">
    <property type="entry name" value="Chorismate_synth"/>
    <property type="match status" value="1"/>
</dbReference>
<dbReference type="SUPFAM" id="SSF103263">
    <property type="entry name" value="Chorismate synthase, AroC"/>
    <property type="match status" value="1"/>
</dbReference>
<dbReference type="PROSITE" id="PS00787">
    <property type="entry name" value="CHORISMATE_SYNTHASE_1"/>
    <property type="match status" value="1"/>
</dbReference>
<dbReference type="PROSITE" id="PS00788">
    <property type="entry name" value="CHORISMATE_SYNTHASE_2"/>
    <property type="match status" value="1"/>
</dbReference>
<dbReference type="PROSITE" id="PS00789">
    <property type="entry name" value="CHORISMATE_SYNTHASE_3"/>
    <property type="match status" value="1"/>
</dbReference>
<name>AROC_SACI2</name>
<accession>C3MRB7</accession>